<dbReference type="EMBL" id="AE017354">
    <property type="protein sequence ID" value="AAU28370.1"/>
    <property type="molecule type" value="Genomic_DNA"/>
</dbReference>
<dbReference type="RefSeq" id="WP_010948014.1">
    <property type="nucleotide sequence ID" value="NC_002942.5"/>
</dbReference>
<dbReference type="RefSeq" id="YP_096317.1">
    <property type="nucleotide sequence ID" value="NC_002942.5"/>
</dbReference>
<dbReference type="SMR" id="Q5ZT57"/>
<dbReference type="STRING" id="272624.lpg2308"/>
<dbReference type="PaxDb" id="272624-lpg2308"/>
<dbReference type="GeneID" id="57036299"/>
<dbReference type="KEGG" id="lpn:lpg2308"/>
<dbReference type="PATRIC" id="fig|272624.6.peg.2422"/>
<dbReference type="eggNOG" id="COG1952">
    <property type="taxonomic scope" value="Bacteria"/>
</dbReference>
<dbReference type="HOGENOM" id="CLU_111574_1_0_6"/>
<dbReference type="OrthoDB" id="9795145at2"/>
<dbReference type="Proteomes" id="UP000000609">
    <property type="component" value="Chromosome"/>
</dbReference>
<dbReference type="GO" id="GO:0005737">
    <property type="term" value="C:cytoplasm"/>
    <property type="evidence" value="ECO:0007669"/>
    <property type="project" value="UniProtKB-SubCell"/>
</dbReference>
<dbReference type="GO" id="GO:0051082">
    <property type="term" value="F:unfolded protein binding"/>
    <property type="evidence" value="ECO:0007669"/>
    <property type="project" value="InterPro"/>
</dbReference>
<dbReference type="GO" id="GO:0006457">
    <property type="term" value="P:protein folding"/>
    <property type="evidence" value="ECO:0007669"/>
    <property type="project" value="UniProtKB-UniRule"/>
</dbReference>
<dbReference type="GO" id="GO:0051262">
    <property type="term" value="P:protein tetramerization"/>
    <property type="evidence" value="ECO:0007669"/>
    <property type="project" value="InterPro"/>
</dbReference>
<dbReference type="GO" id="GO:0015031">
    <property type="term" value="P:protein transport"/>
    <property type="evidence" value="ECO:0007669"/>
    <property type="project" value="UniProtKB-UniRule"/>
</dbReference>
<dbReference type="Gene3D" id="3.10.420.10">
    <property type="entry name" value="SecB-like"/>
    <property type="match status" value="1"/>
</dbReference>
<dbReference type="HAMAP" id="MF_00821">
    <property type="entry name" value="SecB"/>
    <property type="match status" value="1"/>
</dbReference>
<dbReference type="InterPro" id="IPR003708">
    <property type="entry name" value="SecB"/>
</dbReference>
<dbReference type="InterPro" id="IPR035958">
    <property type="entry name" value="SecB-like_sf"/>
</dbReference>
<dbReference type="NCBIfam" id="NF004393">
    <property type="entry name" value="PRK05751.1-4"/>
    <property type="match status" value="1"/>
</dbReference>
<dbReference type="NCBIfam" id="TIGR00809">
    <property type="entry name" value="secB"/>
    <property type="match status" value="1"/>
</dbReference>
<dbReference type="PANTHER" id="PTHR36918">
    <property type="match status" value="1"/>
</dbReference>
<dbReference type="PANTHER" id="PTHR36918:SF1">
    <property type="entry name" value="PROTEIN-EXPORT PROTEIN SECB"/>
    <property type="match status" value="1"/>
</dbReference>
<dbReference type="Pfam" id="PF02556">
    <property type="entry name" value="SecB"/>
    <property type="match status" value="1"/>
</dbReference>
<dbReference type="PRINTS" id="PR01594">
    <property type="entry name" value="SECBCHAPRONE"/>
</dbReference>
<dbReference type="SUPFAM" id="SSF54611">
    <property type="entry name" value="SecB-like"/>
    <property type="match status" value="1"/>
</dbReference>
<sequence>MTEQLNTNQQNDEAQFMIQRIYIKDLSYETPNTPAVFQQQWEPELKLDLNTTTTQLDKNVYEVVLTVTATVMNQKTTAFLVEVKQAGIFTIQGAAASQLDHLLHSFCPSILFPYAREAITSQVIRGSFPQLVLAPINFDALYMQQLEEKQKATGAKDETVSH</sequence>
<name>SECB_LEGPH</name>
<protein>
    <recommendedName>
        <fullName evidence="1">Protein-export protein SecB</fullName>
    </recommendedName>
</protein>
<reference key="1">
    <citation type="journal article" date="2004" name="Science">
        <title>The genomic sequence of the accidental pathogen Legionella pneumophila.</title>
        <authorList>
            <person name="Chien M."/>
            <person name="Morozova I."/>
            <person name="Shi S."/>
            <person name="Sheng H."/>
            <person name="Chen J."/>
            <person name="Gomez S.M."/>
            <person name="Asamani G."/>
            <person name="Hill K."/>
            <person name="Nuara J."/>
            <person name="Feder M."/>
            <person name="Rineer J."/>
            <person name="Greenberg J.J."/>
            <person name="Steshenko V."/>
            <person name="Park S.H."/>
            <person name="Zhao B."/>
            <person name="Teplitskaya E."/>
            <person name="Edwards J.R."/>
            <person name="Pampou S."/>
            <person name="Georghiou A."/>
            <person name="Chou I.-C."/>
            <person name="Iannuccilli W."/>
            <person name="Ulz M.E."/>
            <person name="Kim D.H."/>
            <person name="Geringer-Sameth A."/>
            <person name="Goldsberry C."/>
            <person name="Morozov P."/>
            <person name="Fischer S.G."/>
            <person name="Segal G."/>
            <person name="Qu X."/>
            <person name="Rzhetsky A."/>
            <person name="Zhang P."/>
            <person name="Cayanis E."/>
            <person name="De Jong P.J."/>
            <person name="Ju J."/>
            <person name="Kalachikov S."/>
            <person name="Shuman H.A."/>
            <person name="Russo J.J."/>
        </authorList>
    </citation>
    <scope>NUCLEOTIDE SEQUENCE [LARGE SCALE GENOMIC DNA]</scope>
    <source>
        <strain>Philadelphia 1 / ATCC 33152 / DSM 7513</strain>
    </source>
</reference>
<feature type="chain" id="PRO_0000055383" description="Protein-export protein SecB">
    <location>
        <begin position="1"/>
        <end position="162"/>
    </location>
</feature>
<gene>
    <name evidence="1" type="primary">secB</name>
    <name type="ordered locus">lpg2308</name>
</gene>
<organism>
    <name type="scientific">Legionella pneumophila subsp. pneumophila (strain Philadelphia 1 / ATCC 33152 / DSM 7513)</name>
    <dbReference type="NCBI Taxonomy" id="272624"/>
    <lineage>
        <taxon>Bacteria</taxon>
        <taxon>Pseudomonadati</taxon>
        <taxon>Pseudomonadota</taxon>
        <taxon>Gammaproteobacteria</taxon>
        <taxon>Legionellales</taxon>
        <taxon>Legionellaceae</taxon>
        <taxon>Legionella</taxon>
    </lineage>
</organism>
<proteinExistence type="inferred from homology"/>
<evidence type="ECO:0000255" key="1">
    <source>
        <dbReference type="HAMAP-Rule" id="MF_00821"/>
    </source>
</evidence>
<comment type="function">
    <text evidence="1">One of the proteins required for the normal export of preproteins out of the cell cytoplasm. It is a molecular chaperone that binds to a subset of precursor proteins, maintaining them in a translocation-competent state. It also specifically binds to its receptor SecA.</text>
</comment>
<comment type="subunit">
    <text evidence="1">Homotetramer, a dimer of dimers. One homotetramer interacts with 1 SecA dimer.</text>
</comment>
<comment type="subcellular location">
    <subcellularLocation>
        <location evidence="1">Cytoplasm</location>
    </subcellularLocation>
</comment>
<comment type="similarity">
    <text evidence="1">Belongs to the SecB family.</text>
</comment>
<keyword id="KW-0143">Chaperone</keyword>
<keyword id="KW-0963">Cytoplasm</keyword>
<keyword id="KW-0653">Protein transport</keyword>
<keyword id="KW-1185">Reference proteome</keyword>
<keyword id="KW-0811">Translocation</keyword>
<keyword id="KW-0813">Transport</keyword>
<accession>Q5ZT57</accession>